<protein>
    <recommendedName>
        <fullName>Chaperone protein dnaK</fullName>
    </recommendedName>
    <alternativeName>
        <fullName evidence="1">HSP70</fullName>
    </alternativeName>
    <alternativeName>
        <fullName evidence="1">Heat shock 70 kDa protein</fullName>
    </alternativeName>
    <alternativeName>
        <fullName evidence="1">Heat shock protein 70</fullName>
    </alternativeName>
</protein>
<reference key="1">
    <citation type="journal article" date="2007" name="Mol. Genet. Genomics">
        <title>Chloroplast genomes of the diatoms Phaeodactylum tricornutum and Thalassiosira pseudonana: comparison with other plastid genomes of the red lineage.</title>
        <authorList>
            <person name="Oudot-Le Secq M.-P."/>
            <person name="Grimwood J."/>
            <person name="Shapiro H."/>
            <person name="Armbrust E.V."/>
            <person name="Bowler C."/>
            <person name="Green B.R."/>
        </authorList>
    </citation>
    <scope>NUCLEOTIDE SEQUENCE [LARGE SCALE GENOMIC DNA]</scope>
    <source>
        <strain>CCMP1335 / NEPCC58 / CCAP 1085/12</strain>
    </source>
</reference>
<feature type="chain" id="PRO_0000275351" description="Chaperone protein dnaK">
    <location>
        <begin position="1"/>
        <end position="602"/>
    </location>
</feature>
<comment type="function">
    <text evidence="1">Acts as a chaperone.</text>
</comment>
<comment type="subcellular location">
    <subcellularLocation>
        <location>Plastid</location>
        <location>Chloroplast</location>
    </subcellularLocation>
</comment>
<comment type="similarity">
    <text evidence="1">Belongs to the heat shock protein 70 family.</text>
</comment>
<accession>A0T0X1</accession>
<proteinExistence type="inferred from homology"/>
<gene>
    <name evidence="1" type="primary">dnaK</name>
</gene>
<geneLocation type="chloroplast"/>
<sequence>MNKVVGIDLGTTNSVVAAIEGGQPTVITNAEGFRTTPSIVAYTKKQELLVGQLAKRQSVVNAENTFFSVKRFIGCKADEISEESKELPYKVIKDSNGNIKIKCSSLNKDFSPEEISAQVIRKLIADAKEYLGQDVTKAVITVPAYFNDSQRQATVDAGKIAGIEVLRIINEPTAASLAYGLDKKQNETILVFDLGGGTFDVSILEVGDGIFEVLSTAGDTNLGGDDFDKALVRWLVEDFEAKEGTNLTKDIQALQRLTEAAEKAKMELSNVEKTTINLPFITADKNGPKHIQQELTREKFESLCQDLINRCRIPVEKALKDAKLDQSGINEVVLVGGSTRIPAIQQLVESLTGKKPNKSVNPDEVVAIGAAIQAGILAGEITDILLLDVTPLSLGVETVGGIMTKLISRNTTIPVKKSELFSTAADNQTNVEIHVLQGEREVVSGNKSLGNFKLEGIPQAPKGKPQIEVTFDINVDGILSVTAKENESGKEQNVTIQGASNLSESEVNDMLEEAEKYAVIDKEQKEKSEMVVSATAYCDEVEKKLNSGEMGECTTEEEEEIKNVIKTLREALSSANYASIKESFEQLRTLTEVHLNSTNPAN</sequence>
<organism>
    <name type="scientific">Thalassiosira pseudonana</name>
    <name type="common">Marine diatom</name>
    <name type="synonym">Cyclotella nana</name>
    <dbReference type="NCBI Taxonomy" id="35128"/>
    <lineage>
        <taxon>Eukaryota</taxon>
        <taxon>Sar</taxon>
        <taxon>Stramenopiles</taxon>
        <taxon>Ochrophyta</taxon>
        <taxon>Bacillariophyta</taxon>
        <taxon>Coscinodiscophyceae</taxon>
        <taxon>Thalassiosirophycidae</taxon>
        <taxon>Thalassiosirales</taxon>
        <taxon>Thalassiosiraceae</taxon>
        <taxon>Thalassiosira</taxon>
    </lineage>
</organism>
<name>DNAK_THAPS</name>
<dbReference type="EMBL" id="EF067921">
    <property type="protein sequence ID" value="ABK20806.1"/>
    <property type="molecule type" value="Genomic_DNA"/>
</dbReference>
<dbReference type="RefSeq" id="YP_874583.1">
    <property type="nucleotide sequence ID" value="NC_008589.1"/>
</dbReference>
<dbReference type="SMR" id="A0T0X1"/>
<dbReference type="STRING" id="35128.A0T0X1"/>
<dbReference type="GeneID" id="4524722"/>
<dbReference type="InParanoid" id="A0T0X1"/>
<dbReference type="GO" id="GO:0009507">
    <property type="term" value="C:chloroplast"/>
    <property type="evidence" value="ECO:0007669"/>
    <property type="project" value="UniProtKB-SubCell"/>
</dbReference>
<dbReference type="GO" id="GO:0005737">
    <property type="term" value="C:cytoplasm"/>
    <property type="evidence" value="ECO:0000318"/>
    <property type="project" value="GO_Central"/>
</dbReference>
<dbReference type="GO" id="GO:0005739">
    <property type="term" value="C:mitochondrion"/>
    <property type="evidence" value="ECO:0000318"/>
    <property type="project" value="GO_Central"/>
</dbReference>
<dbReference type="GO" id="GO:0005524">
    <property type="term" value="F:ATP binding"/>
    <property type="evidence" value="ECO:0007669"/>
    <property type="project" value="UniProtKB-UniRule"/>
</dbReference>
<dbReference type="GO" id="GO:0016887">
    <property type="term" value="F:ATP hydrolysis activity"/>
    <property type="evidence" value="ECO:0000318"/>
    <property type="project" value="GO_Central"/>
</dbReference>
<dbReference type="GO" id="GO:0140662">
    <property type="term" value="F:ATP-dependent protein folding chaperone"/>
    <property type="evidence" value="ECO:0007669"/>
    <property type="project" value="InterPro"/>
</dbReference>
<dbReference type="GO" id="GO:0031072">
    <property type="term" value="F:heat shock protein binding"/>
    <property type="evidence" value="ECO:0000318"/>
    <property type="project" value="GO_Central"/>
</dbReference>
<dbReference type="GO" id="GO:0044183">
    <property type="term" value="F:protein folding chaperone"/>
    <property type="evidence" value="ECO:0000318"/>
    <property type="project" value="GO_Central"/>
</dbReference>
<dbReference type="GO" id="GO:0051082">
    <property type="term" value="F:unfolded protein binding"/>
    <property type="evidence" value="ECO:0007669"/>
    <property type="project" value="InterPro"/>
</dbReference>
<dbReference type="GO" id="GO:0051085">
    <property type="term" value="P:chaperone cofactor-dependent protein refolding"/>
    <property type="evidence" value="ECO:0000318"/>
    <property type="project" value="GO_Central"/>
</dbReference>
<dbReference type="GO" id="GO:0016226">
    <property type="term" value="P:iron-sulfur cluster assembly"/>
    <property type="evidence" value="ECO:0000318"/>
    <property type="project" value="GO_Central"/>
</dbReference>
<dbReference type="GO" id="GO:0042026">
    <property type="term" value="P:protein refolding"/>
    <property type="evidence" value="ECO:0000318"/>
    <property type="project" value="GO_Central"/>
</dbReference>
<dbReference type="CDD" id="cd10234">
    <property type="entry name" value="ASKHA_NBD_HSP70_DnaK-like"/>
    <property type="match status" value="1"/>
</dbReference>
<dbReference type="FunFam" id="2.60.34.10:FF:000014">
    <property type="entry name" value="Chaperone protein DnaK HSP70"/>
    <property type="match status" value="1"/>
</dbReference>
<dbReference type="FunFam" id="3.30.420.40:FF:000004">
    <property type="entry name" value="Molecular chaperone DnaK"/>
    <property type="match status" value="1"/>
</dbReference>
<dbReference type="FunFam" id="3.90.640.10:FF:000003">
    <property type="entry name" value="Molecular chaperone DnaK"/>
    <property type="match status" value="1"/>
</dbReference>
<dbReference type="Gene3D" id="3.30.420.40">
    <property type="match status" value="2"/>
</dbReference>
<dbReference type="Gene3D" id="3.90.640.10">
    <property type="entry name" value="Actin, Chain A, domain 4"/>
    <property type="match status" value="1"/>
</dbReference>
<dbReference type="Gene3D" id="2.60.34.10">
    <property type="entry name" value="Substrate Binding Domain Of DNAk, Chain A, domain 1"/>
    <property type="match status" value="1"/>
</dbReference>
<dbReference type="HAMAP" id="MF_00332">
    <property type="entry name" value="DnaK"/>
    <property type="match status" value="1"/>
</dbReference>
<dbReference type="InterPro" id="IPR043129">
    <property type="entry name" value="ATPase_NBD"/>
</dbReference>
<dbReference type="InterPro" id="IPR012725">
    <property type="entry name" value="Chaperone_DnaK"/>
</dbReference>
<dbReference type="InterPro" id="IPR018181">
    <property type="entry name" value="Heat_shock_70_CS"/>
</dbReference>
<dbReference type="InterPro" id="IPR029048">
    <property type="entry name" value="HSP70_C_sf"/>
</dbReference>
<dbReference type="InterPro" id="IPR029047">
    <property type="entry name" value="HSP70_peptide-bd_sf"/>
</dbReference>
<dbReference type="InterPro" id="IPR013126">
    <property type="entry name" value="Hsp_70_fam"/>
</dbReference>
<dbReference type="NCBIfam" id="NF001413">
    <property type="entry name" value="PRK00290.1"/>
    <property type="match status" value="1"/>
</dbReference>
<dbReference type="NCBIfam" id="NF003520">
    <property type="entry name" value="PRK05183.1"/>
    <property type="match status" value="1"/>
</dbReference>
<dbReference type="NCBIfam" id="TIGR02350">
    <property type="entry name" value="prok_dnaK"/>
    <property type="match status" value="1"/>
</dbReference>
<dbReference type="PANTHER" id="PTHR19375">
    <property type="entry name" value="HEAT SHOCK PROTEIN 70KDA"/>
    <property type="match status" value="1"/>
</dbReference>
<dbReference type="Pfam" id="PF00012">
    <property type="entry name" value="HSP70"/>
    <property type="match status" value="1"/>
</dbReference>
<dbReference type="PRINTS" id="PR00301">
    <property type="entry name" value="HEATSHOCK70"/>
</dbReference>
<dbReference type="SUPFAM" id="SSF53067">
    <property type="entry name" value="Actin-like ATPase domain"/>
    <property type="match status" value="2"/>
</dbReference>
<dbReference type="SUPFAM" id="SSF100934">
    <property type="entry name" value="Heat shock protein 70kD (HSP70), C-terminal subdomain"/>
    <property type="match status" value="1"/>
</dbReference>
<dbReference type="SUPFAM" id="SSF100920">
    <property type="entry name" value="Heat shock protein 70kD (HSP70), peptide-binding domain"/>
    <property type="match status" value="1"/>
</dbReference>
<dbReference type="PROSITE" id="PS00297">
    <property type="entry name" value="HSP70_1"/>
    <property type="match status" value="1"/>
</dbReference>
<dbReference type="PROSITE" id="PS00329">
    <property type="entry name" value="HSP70_2"/>
    <property type="match status" value="1"/>
</dbReference>
<dbReference type="PROSITE" id="PS01036">
    <property type="entry name" value="HSP70_3"/>
    <property type="match status" value="1"/>
</dbReference>
<evidence type="ECO:0000255" key="1">
    <source>
        <dbReference type="HAMAP-Rule" id="MF_00332"/>
    </source>
</evidence>
<keyword id="KW-0067">ATP-binding</keyword>
<keyword id="KW-0143">Chaperone</keyword>
<keyword id="KW-0150">Chloroplast</keyword>
<keyword id="KW-0547">Nucleotide-binding</keyword>
<keyword id="KW-0934">Plastid</keyword>